<protein>
    <recommendedName>
        <fullName evidence="1">Pole-localizer protein TmaR</fullName>
    </recommendedName>
</protein>
<comment type="function">
    <text evidence="1">Pole-localizer protein involved in the regulation of several cellular processes.</text>
</comment>
<comment type="subcellular location">
    <subcellularLocation>
        <location evidence="1">Cytoplasm</location>
    </subcellularLocation>
</comment>
<comment type="similarity">
    <text evidence="1">Belongs to the pole-localizer TmaR family.</text>
</comment>
<gene>
    <name evidence="1" type="primary">tmaR</name>
    <name type="ordered locus">KPN78578_24220</name>
    <name type="ORF">KPN_02465</name>
</gene>
<name>TMAR_KLEP7</name>
<keyword id="KW-0175">Coiled coil</keyword>
<keyword id="KW-0963">Cytoplasm</keyword>
<sequence length="107" mass="12578">METTKPSFQDVLEFVRLYRRKNKLQREIQDVEKKIRDNQKRVLLLDNLSDYIKPGMSVEAIQGIIASMKSDYEDRVDDYIIKNAELSKERRDISKKLKVMGEAKVEG</sequence>
<feature type="chain" id="PRO_1000061979" description="Pole-localizer protein TmaR">
    <location>
        <begin position="1"/>
        <end position="107"/>
    </location>
</feature>
<feature type="coiled-coil region" evidence="1">
    <location>
        <begin position="14"/>
        <end position="41"/>
    </location>
</feature>
<evidence type="ECO:0000255" key="1">
    <source>
        <dbReference type="HAMAP-Rule" id="MF_00683"/>
    </source>
</evidence>
<dbReference type="EMBL" id="CP000647">
    <property type="protein sequence ID" value="ABR77883.1"/>
    <property type="molecule type" value="Genomic_DNA"/>
</dbReference>
<dbReference type="RefSeq" id="WP_002911883.1">
    <property type="nucleotide sequence ID" value="NC_009648.1"/>
</dbReference>
<dbReference type="SMR" id="A6TBB2"/>
<dbReference type="STRING" id="272620.KPN_02465"/>
<dbReference type="jPOST" id="A6TBB2"/>
<dbReference type="PaxDb" id="272620-KPN_02465"/>
<dbReference type="EnsemblBacteria" id="ABR77883">
    <property type="protein sequence ID" value="ABR77883"/>
    <property type="gene ID" value="KPN_02465"/>
</dbReference>
<dbReference type="KEGG" id="kpn:KPN_02465"/>
<dbReference type="HOGENOM" id="CLU_153146_0_0_6"/>
<dbReference type="Proteomes" id="UP000000265">
    <property type="component" value="Chromosome"/>
</dbReference>
<dbReference type="GO" id="GO:0005829">
    <property type="term" value="C:cytosol"/>
    <property type="evidence" value="ECO:0007669"/>
    <property type="project" value="TreeGrafter"/>
</dbReference>
<dbReference type="HAMAP" id="MF_00683">
    <property type="entry name" value="Pole_loc_TmaR"/>
    <property type="match status" value="1"/>
</dbReference>
<dbReference type="InterPro" id="IPR007458">
    <property type="entry name" value="DUF496"/>
</dbReference>
<dbReference type="InterPro" id="IPR053375">
    <property type="entry name" value="UPF0265"/>
</dbReference>
<dbReference type="NCBIfam" id="NF003844">
    <property type="entry name" value="PRK05423.1"/>
    <property type="match status" value="1"/>
</dbReference>
<dbReference type="NCBIfam" id="NF040881">
    <property type="entry name" value="PTS_reg_TmaR"/>
    <property type="match status" value="1"/>
</dbReference>
<dbReference type="PANTHER" id="PTHR39591">
    <property type="entry name" value="UPF0265 PROTEIN YEEX"/>
    <property type="match status" value="1"/>
</dbReference>
<dbReference type="PANTHER" id="PTHR39591:SF1">
    <property type="entry name" value="UPF0265 PROTEIN YEEX"/>
    <property type="match status" value="1"/>
</dbReference>
<dbReference type="Pfam" id="PF04363">
    <property type="entry name" value="DUF496"/>
    <property type="match status" value="1"/>
</dbReference>
<dbReference type="PIRSF" id="PIRSF028773">
    <property type="entry name" value="UCP028773"/>
    <property type="match status" value="1"/>
</dbReference>
<reference key="1">
    <citation type="submission" date="2006-09" db="EMBL/GenBank/DDBJ databases">
        <authorList>
            <consortium name="The Klebsiella pneumonia Genome Sequencing Project"/>
            <person name="McClelland M."/>
            <person name="Sanderson E.K."/>
            <person name="Spieth J."/>
            <person name="Clifton W.S."/>
            <person name="Latreille P."/>
            <person name="Sabo A."/>
            <person name="Pepin K."/>
            <person name="Bhonagiri V."/>
            <person name="Porwollik S."/>
            <person name="Ali J."/>
            <person name="Wilson R.K."/>
        </authorList>
    </citation>
    <scope>NUCLEOTIDE SEQUENCE [LARGE SCALE GENOMIC DNA]</scope>
    <source>
        <strain>ATCC 700721 / MGH 78578</strain>
    </source>
</reference>
<proteinExistence type="inferred from homology"/>
<accession>A6TBB2</accession>
<organism>
    <name type="scientific">Klebsiella pneumoniae subsp. pneumoniae (strain ATCC 700721 / MGH 78578)</name>
    <dbReference type="NCBI Taxonomy" id="272620"/>
    <lineage>
        <taxon>Bacteria</taxon>
        <taxon>Pseudomonadati</taxon>
        <taxon>Pseudomonadota</taxon>
        <taxon>Gammaproteobacteria</taxon>
        <taxon>Enterobacterales</taxon>
        <taxon>Enterobacteriaceae</taxon>
        <taxon>Klebsiella/Raoultella group</taxon>
        <taxon>Klebsiella</taxon>
        <taxon>Klebsiella pneumoniae complex</taxon>
    </lineage>
</organism>